<sequence>MDQYEVLEQIGKGAFGSALLVRHKLEKKKYVLKKIRLARQTDRTRRSAHQEMQLIATVRNPFIVEYKDSWVEKGCYVCIVIGYCEGGDMAEAIKRANGTYFSEEKLCKWLVQLLMALDYLHANHILHRDVKCSNIFIARDQSIRLGDFGLAKILTSDDLASSVVGTPSYMCPELLADIPYGTKSDIWSLGCCIYEMTALRPAFKAFDMQALINKITKSIVSPLPTKYSGAFRGLIKSMLRKSPEHRPSAAQLLKHPQLQPYVLQVQLKSSPTRNILPIHQSLTDKVKKMTFPSDVVDSARRRMARRNSLGNERTVTFSKPSPERNSVSSTRSIKEYTTTQSVEGLSVDSSEAGDEVTSKAIITKTSSILRTPKSLPAKTYTARNQLEPPKTSYNRTYRSELPSKTTPNKIARPARRASLPLSTYETPTKRSISILEQLDSPDVSVNAPRIDRIAEFPLASSEDPLLPIHNKLSPGHGSCSTPPFINRSITKDKCTIQVLRTDGDNGSDSSGRNATAASSRGSNDSRQQRFDTSSFQQRAEALEGLLEFSAQLLQQERYEELGILLKPFGPEKASPRETAIWLTKSFKETAS</sequence>
<protein>
    <recommendedName>
        <fullName>Serine/threonine-protein kinase Nek2</fullName>
        <shortName>OsNek2</shortName>
        <ecNumber>2.7.11.1</ecNumber>
    </recommendedName>
    <alternativeName>
        <fullName>NimA-related protein kinase 2</fullName>
    </alternativeName>
</protein>
<keyword id="KW-0067">ATP-binding</keyword>
<keyword id="KW-0418">Kinase</keyword>
<keyword id="KW-0547">Nucleotide-binding</keyword>
<keyword id="KW-1185">Reference proteome</keyword>
<keyword id="KW-0723">Serine/threonine-protein kinase</keyword>
<keyword id="KW-0808">Transferase</keyword>
<reference key="1">
    <citation type="journal article" date="2005" name="PLoS Biol.">
        <title>The genomes of Oryza sativa: a history of duplications.</title>
        <authorList>
            <person name="Yu J."/>
            <person name="Wang J."/>
            <person name="Lin W."/>
            <person name="Li S."/>
            <person name="Li H."/>
            <person name="Zhou J."/>
            <person name="Ni P."/>
            <person name="Dong W."/>
            <person name="Hu S."/>
            <person name="Zeng C."/>
            <person name="Zhang J."/>
            <person name="Zhang Y."/>
            <person name="Li R."/>
            <person name="Xu Z."/>
            <person name="Li S."/>
            <person name="Li X."/>
            <person name="Zheng H."/>
            <person name="Cong L."/>
            <person name="Lin L."/>
            <person name="Yin J."/>
            <person name="Geng J."/>
            <person name="Li G."/>
            <person name="Shi J."/>
            <person name="Liu J."/>
            <person name="Lv H."/>
            <person name="Li J."/>
            <person name="Wang J."/>
            <person name="Deng Y."/>
            <person name="Ran L."/>
            <person name="Shi X."/>
            <person name="Wang X."/>
            <person name="Wu Q."/>
            <person name="Li C."/>
            <person name="Ren X."/>
            <person name="Wang J."/>
            <person name="Wang X."/>
            <person name="Li D."/>
            <person name="Liu D."/>
            <person name="Zhang X."/>
            <person name="Ji Z."/>
            <person name="Zhao W."/>
            <person name="Sun Y."/>
            <person name="Zhang Z."/>
            <person name="Bao J."/>
            <person name="Han Y."/>
            <person name="Dong L."/>
            <person name="Ji J."/>
            <person name="Chen P."/>
            <person name="Wu S."/>
            <person name="Liu J."/>
            <person name="Xiao Y."/>
            <person name="Bu D."/>
            <person name="Tan J."/>
            <person name="Yang L."/>
            <person name="Ye C."/>
            <person name="Zhang J."/>
            <person name="Xu J."/>
            <person name="Zhou Y."/>
            <person name="Yu Y."/>
            <person name="Zhang B."/>
            <person name="Zhuang S."/>
            <person name="Wei H."/>
            <person name="Liu B."/>
            <person name="Lei M."/>
            <person name="Yu H."/>
            <person name="Li Y."/>
            <person name="Xu H."/>
            <person name="Wei S."/>
            <person name="He X."/>
            <person name="Fang L."/>
            <person name="Zhang Z."/>
            <person name="Zhang Y."/>
            <person name="Huang X."/>
            <person name="Su Z."/>
            <person name="Tong W."/>
            <person name="Li J."/>
            <person name="Tong Z."/>
            <person name="Li S."/>
            <person name="Ye J."/>
            <person name="Wang L."/>
            <person name="Fang L."/>
            <person name="Lei T."/>
            <person name="Chen C.-S."/>
            <person name="Chen H.-C."/>
            <person name="Xu Z."/>
            <person name="Li H."/>
            <person name="Huang H."/>
            <person name="Zhang F."/>
            <person name="Xu H."/>
            <person name="Li N."/>
            <person name="Zhao C."/>
            <person name="Li S."/>
            <person name="Dong L."/>
            <person name="Huang Y."/>
            <person name="Li L."/>
            <person name="Xi Y."/>
            <person name="Qi Q."/>
            <person name="Li W."/>
            <person name="Zhang B."/>
            <person name="Hu W."/>
            <person name="Zhang Y."/>
            <person name="Tian X."/>
            <person name="Jiao Y."/>
            <person name="Liang X."/>
            <person name="Jin J."/>
            <person name="Gao L."/>
            <person name="Zheng W."/>
            <person name="Hao B."/>
            <person name="Liu S.-M."/>
            <person name="Wang W."/>
            <person name="Yuan L."/>
            <person name="Cao M."/>
            <person name="McDermott J."/>
            <person name="Samudrala R."/>
            <person name="Wang J."/>
            <person name="Wong G.K.-S."/>
            <person name="Yang H."/>
        </authorList>
    </citation>
    <scope>NUCLEOTIDE SEQUENCE [LARGE SCALE GENOMIC DNA]</scope>
    <source>
        <strain>cv. 93-11</strain>
    </source>
</reference>
<reference key="2">
    <citation type="journal article" date="2007" name="Plant J.">
        <title>Members of the plant NIMA-related kinases are involved in organ development and vascularization in poplar, Arabidopsis and rice.</title>
        <authorList>
            <person name="Vigneault F."/>
            <person name="Lachance D."/>
            <person name="Cloutier M."/>
            <person name="Pelletier G."/>
            <person name="Levasseur C."/>
            <person name="Seguin A."/>
        </authorList>
    </citation>
    <scope>GENE FAMILY</scope>
    <scope>NOMENCLATURE</scope>
</reference>
<organism>
    <name type="scientific">Oryza sativa subsp. indica</name>
    <name type="common">Rice</name>
    <dbReference type="NCBI Taxonomy" id="39946"/>
    <lineage>
        <taxon>Eukaryota</taxon>
        <taxon>Viridiplantae</taxon>
        <taxon>Streptophyta</taxon>
        <taxon>Embryophyta</taxon>
        <taxon>Tracheophyta</taxon>
        <taxon>Spermatophyta</taxon>
        <taxon>Magnoliopsida</taxon>
        <taxon>Liliopsida</taxon>
        <taxon>Poales</taxon>
        <taxon>Poaceae</taxon>
        <taxon>BOP clade</taxon>
        <taxon>Oryzoideae</taxon>
        <taxon>Oryzeae</taxon>
        <taxon>Oryzinae</taxon>
        <taxon>Oryza</taxon>
        <taxon>Oryza sativa</taxon>
    </lineage>
</organism>
<evidence type="ECO:0000255" key="1">
    <source>
        <dbReference type="PROSITE-ProRule" id="PRU00159"/>
    </source>
</evidence>
<evidence type="ECO:0000255" key="2">
    <source>
        <dbReference type="PROSITE-ProRule" id="PRU10027"/>
    </source>
</evidence>
<evidence type="ECO:0000256" key="3">
    <source>
        <dbReference type="SAM" id="MobiDB-lite"/>
    </source>
</evidence>
<evidence type="ECO:0000305" key="4"/>
<dbReference type="EC" id="2.7.11.1"/>
<dbReference type="EMBL" id="CM000137">
    <property type="protein sequence ID" value="EAY83806.1"/>
    <property type="molecule type" value="Genomic_DNA"/>
</dbReference>
<dbReference type="SMR" id="A2ZMH2"/>
<dbReference type="STRING" id="39946.A2ZMH2"/>
<dbReference type="EnsemblPlants" id="BGIOSGA035880-TA">
    <property type="protein sequence ID" value="BGIOSGA035880-PA"/>
    <property type="gene ID" value="BGIOSGA035880"/>
</dbReference>
<dbReference type="Gramene" id="BGIOSGA035880-TA">
    <property type="protein sequence ID" value="BGIOSGA035880-PA"/>
    <property type="gene ID" value="BGIOSGA035880"/>
</dbReference>
<dbReference type="HOGENOM" id="CLU_000288_128_3_1"/>
<dbReference type="OMA" id="RNMSPIY"/>
<dbReference type="Proteomes" id="UP000007015">
    <property type="component" value="Chromosome 12"/>
</dbReference>
<dbReference type="GO" id="GO:0005524">
    <property type="term" value="F:ATP binding"/>
    <property type="evidence" value="ECO:0007669"/>
    <property type="project" value="UniProtKB-KW"/>
</dbReference>
<dbReference type="GO" id="GO:0106310">
    <property type="term" value="F:protein serine kinase activity"/>
    <property type="evidence" value="ECO:0007669"/>
    <property type="project" value="RHEA"/>
</dbReference>
<dbReference type="GO" id="GO:0004674">
    <property type="term" value="F:protein serine/threonine kinase activity"/>
    <property type="evidence" value="ECO:0007669"/>
    <property type="project" value="UniProtKB-KW"/>
</dbReference>
<dbReference type="CDD" id="cd08215">
    <property type="entry name" value="STKc_Nek"/>
    <property type="match status" value="1"/>
</dbReference>
<dbReference type="FunFam" id="3.30.200.20:FF:000108">
    <property type="entry name" value="Serine/threonine-protein kinase Nek2"/>
    <property type="match status" value="1"/>
</dbReference>
<dbReference type="Gene3D" id="3.30.200.20">
    <property type="entry name" value="Phosphorylase Kinase, domain 1"/>
    <property type="match status" value="1"/>
</dbReference>
<dbReference type="Gene3D" id="1.10.510.10">
    <property type="entry name" value="Transferase(Phosphotransferase) domain 1"/>
    <property type="match status" value="1"/>
</dbReference>
<dbReference type="InterPro" id="IPR011009">
    <property type="entry name" value="Kinase-like_dom_sf"/>
</dbReference>
<dbReference type="InterPro" id="IPR050660">
    <property type="entry name" value="NEK_Ser/Thr_kinase"/>
</dbReference>
<dbReference type="InterPro" id="IPR000719">
    <property type="entry name" value="Prot_kinase_dom"/>
</dbReference>
<dbReference type="InterPro" id="IPR017441">
    <property type="entry name" value="Protein_kinase_ATP_BS"/>
</dbReference>
<dbReference type="InterPro" id="IPR008271">
    <property type="entry name" value="Ser/Thr_kinase_AS"/>
</dbReference>
<dbReference type="PANTHER" id="PTHR43671">
    <property type="entry name" value="SERINE/THREONINE-PROTEIN KINASE NEK"/>
    <property type="match status" value="1"/>
</dbReference>
<dbReference type="PANTHER" id="PTHR43671:SF66">
    <property type="entry name" value="SERINE_THREONINE-PROTEIN KINASE NEK2"/>
    <property type="match status" value="1"/>
</dbReference>
<dbReference type="Pfam" id="PF00069">
    <property type="entry name" value="Pkinase"/>
    <property type="match status" value="1"/>
</dbReference>
<dbReference type="SMART" id="SM00220">
    <property type="entry name" value="S_TKc"/>
    <property type="match status" value="1"/>
</dbReference>
<dbReference type="SUPFAM" id="SSF56112">
    <property type="entry name" value="Protein kinase-like (PK-like)"/>
    <property type="match status" value="1"/>
</dbReference>
<dbReference type="PROSITE" id="PS00107">
    <property type="entry name" value="PROTEIN_KINASE_ATP"/>
    <property type="match status" value="1"/>
</dbReference>
<dbReference type="PROSITE" id="PS50011">
    <property type="entry name" value="PROTEIN_KINASE_DOM"/>
    <property type="match status" value="1"/>
</dbReference>
<dbReference type="PROSITE" id="PS00108">
    <property type="entry name" value="PROTEIN_KINASE_ST"/>
    <property type="match status" value="1"/>
</dbReference>
<accession>A2ZMH2</accession>
<feature type="chain" id="PRO_0000314046" description="Serine/threonine-protein kinase Nek2">
    <location>
        <begin position="1"/>
        <end position="591"/>
    </location>
</feature>
<feature type="domain" description="Protein kinase" evidence="1">
    <location>
        <begin position="4"/>
        <end position="258"/>
    </location>
</feature>
<feature type="region of interest" description="Disordered" evidence="3">
    <location>
        <begin position="309"/>
        <end position="331"/>
    </location>
</feature>
<feature type="region of interest" description="Disordered" evidence="3">
    <location>
        <begin position="387"/>
        <end position="408"/>
    </location>
</feature>
<feature type="region of interest" description="Disordered" evidence="3">
    <location>
        <begin position="500"/>
        <end position="534"/>
    </location>
</feature>
<feature type="compositionally biased region" description="Polar residues" evidence="3">
    <location>
        <begin position="391"/>
        <end position="408"/>
    </location>
</feature>
<feature type="compositionally biased region" description="Polar residues" evidence="3">
    <location>
        <begin position="504"/>
        <end position="534"/>
    </location>
</feature>
<feature type="active site" description="Proton acceptor" evidence="1 2">
    <location>
        <position position="129"/>
    </location>
</feature>
<feature type="binding site" evidence="1">
    <location>
        <begin position="10"/>
        <end position="18"/>
    </location>
    <ligand>
        <name>ATP</name>
        <dbReference type="ChEBI" id="CHEBI:30616"/>
    </ligand>
</feature>
<feature type="binding site" evidence="1">
    <location>
        <position position="33"/>
    </location>
    <ligand>
        <name>ATP</name>
        <dbReference type="ChEBI" id="CHEBI:30616"/>
    </ligand>
</feature>
<gene>
    <name type="primary">NEK2</name>
    <name type="ORF">OsI_037765</name>
</gene>
<comment type="function">
    <text>May be involved in plant development processes.</text>
</comment>
<comment type="catalytic activity">
    <reaction>
        <text>L-seryl-[protein] + ATP = O-phospho-L-seryl-[protein] + ADP + H(+)</text>
        <dbReference type="Rhea" id="RHEA:17989"/>
        <dbReference type="Rhea" id="RHEA-COMP:9863"/>
        <dbReference type="Rhea" id="RHEA-COMP:11604"/>
        <dbReference type="ChEBI" id="CHEBI:15378"/>
        <dbReference type="ChEBI" id="CHEBI:29999"/>
        <dbReference type="ChEBI" id="CHEBI:30616"/>
        <dbReference type="ChEBI" id="CHEBI:83421"/>
        <dbReference type="ChEBI" id="CHEBI:456216"/>
        <dbReference type="EC" id="2.7.11.1"/>
    </reaction>
</comment>
<comment type="catalytic activity">
    <reaction>
        <text>L-threonyl-[protein] + ATP = O-phospho-L-threonyl-[protein] + ADP + H(+)</text>
        <dbReference type="Rhea" id="RHEA:46608"/>
        <dbReference type="Rhea" id="RHEA-COMP:11060"/>
        <dbReference type="Rhea" id="RHEA-COMP:11605"/>
        <dbReference type="ChEBI" id="CHEBI:15378"/>
        <dbReference type="ChEBI" id="CHEBI:30013"/>
        <dbReference type="ChEBI" id="CHEBI:30616"/>
        <dbReference type="ChEBI" id="CHEBI:61977"/>
        <dbReference type="ChEBI" id="CHEBI:456216"/>
        <dbReference type="EC" id="2.7.11.1"/>
    </reaction>
</comment>
<comment type="similarity">
    <text evidence="4">Belongs to the protein kinase superfamily. NEK Ser/Thr protein kinase family. NIMA subfamily.</text>
</comment>
<proteinExistence type="inferred from homology"/>
<name>NEK2_ORYSI</name>